<name>CTU1_XENLA</name>
<comment type="function">
    <text evidence="1">Plays a central role in 2-thiolation of mcm(5)S(2)U at tRNA wobble positions of tRNA(Lys), tRNA(Glu) and tRNA(Gln). Directly binds tRNAs and probably acts by catalyzing adenylation of tRNAs, an intermediate required for 2-thiolation. It is unclear whether it acts as a sulfurtransferase that transfers sulfur from thiocarboxylated urm1 onto the uridine of tRNAs at wobble position.</text>
</comment>
<comment type="pathway">
    <text evidence="1">tRNA modification; 5-methoxycarbonylmethyl-2-thiouridine-tRNA biosynthesis.</text>
</comment>
<comment type="subcellular location">
    <subcellularLocation>
        <location evidence="1">Cytoplasm</location>
    </subcellularLocation>
</comment>
<comment type="similarity">
    <text evidence="1">Belongs to the TtcA family. CTU1/NCS6/ATPBD3 subfamily.</text>
</comment>
<sequence>MPVKCSSCEEWRAVLRRPKTGHSLCKDCFFYAFEEEIHNTIVSAKLFHPGEKVGIGASGGKDSTVLAHVMKVLNERYAYGLDLILLSVDEGISGYRDDSLQTVKRNQQQYELPLKIVSYLELYGWTMDQIVKQVGLKNNCTFCGVFRRQALDRGAMMLGINKICTGHNADDIAETVLMNFLRGDIARLRRCTAITTGSEGAIPRCKPLKYTYEKEIVLYAYFKKLDYFSTECIYSPNAYRGHARVFLKDLEAIRPSSIIDIIHSGENLSVNEDVRMPVQGTCTRCGYISSQSLCKACVLLEGLNRGLPKLGIGKHHKLHHKLLSQEPLSEQEERKLRAVVH</sequence>
<keyword id="KW-0963">Cytoplasm</keyword>
<keyword id="KW-1185">Reference proteome</keyword>
<keyword id="KW-0694">RNA-binding</keyword>
<keyword id="KW-0808">Transferase</keyword>
<keyword id="KW-0819">tRNA processing</keyword>
<keyword id="KW-0820">tRNA-binding</keyword>
<evidence type="ECO:0000255" key="1">
    <source>
        <dbReference type="HAMAP-Rule" id="MF_03053"/>
    </source>
</evidence>
<dbReference type="EC" id="2.7.7.-" evidence="1"/>
<dbReference type="EMBL" id="BC123240">
    <property type="protein sequence ID" value="AAI23241.1"/>
    <property type="molecule type" value="mRNA"/>
</dbReference>
<dbReference type="RefSeq" id="NP_001090363.1">
    <property type="nucleotide sequence ID" value="NM_001096894.1"/>
</dbReference>
<dbReference type="SMR" id="Q05AW7"/>
<dbReference type="BioGRID" id="607981">
    <property type="interactions" value="1"/>
</dbReference>
<dbReference type="IntAct" id="Q05AW7">
    <property type="interactions" value="1"/>
</dbReference>
<dbReference type="DNASU" id="779274"/>
<dbReference type="GeneID" id="779274"/>
<dbReference type="KEGG" id="xla:779274"/>
<dbReference type="AGR" id="Xenbase:XB-GENE-5872246"/>
<dbReference type="CTD" id="779274"/>
<dbReference type="Xenbase" id="XB-GENE-5872246">
    <property type="gene designation" value="ctu1.L"/>
</dbReference>
<dbReference type="OMA" id="KPVRGIC"/>
<dbReference type="OrthoDB" id="198857at2759"/>
<dbReference type="UniPathway" id="UPA00988"/>
<dbReference type="Proteomes" id="UP000186698">
    <property type="component" value="Chromosome 1L"/>
</dbReference>
<dbReference type="Bgee" id="779274">
    <property type="expression patterns" value="Expressed in egg cell and 19 other cell types or tissues"/>
</dbReference>
<dbReference type="GO" id="GO:0005829">
    <property type="term" value="C:cytosol"/>
    <property type="evidence" value="ECO:0000250"/>
    <property type="project" value="UniProtKB"/>
</dbReference>
<dbReference type="GO" id="GO:0002144">
    <property type="term" value="C:cytosolic tRNA wobble base thiouridylase complex"/>
    <property type="evidence" value="ECO:0000318"/>
    <property type="project" value="GO_Central"/>
</dbReference>
<dbReference type="GO" id="GO:0005739">
    <property type="term" value="C:mitochondrion"/>
    <property type="evidence" value="ECO:0007669"/>
    <property type="project" value="TreeGrafter"/>
</dbReference>
<dbReference type="GO" id="GO:0016779">
    <property type="term" value="F:nucleotidyltransferase activity"/>
    <property type="evidence" value="ECO:0007669"/>
    <property type="project" value="UniProtKB-UniRule"/>
</dbReference>
<dbReference type="GO" id="GO:0000049">
    <property type="term" value="F:tRNA binding"/>
    <property type="evidence" value="ECO:0000250"/>
    <property type="project" value="UniProtKB"/>
</dbReference>
<dbReference type="GO" id="GO:0032447">
    <property type="term" value="P:protein urmylation"/>
    <property type="evidence" value="ECO:0007669"/>
    <property type="project" value="UniProtKB-UniRule"/>
</dbReference>
<dbReference type="GO" id="GO:0034227">
    <property type="term" value="P:tRNA thio-modification"/>
    <property type="evidence" value="ECO:0000250"/>
    <property type="project" value="UniProtKB"/>
</dbReference>
<dbReference type="GO" id="GO:0002143">
    <property type="term" value="P:tRNA wobble position uridine thiolation"/>
    <property type="evidence" value="ECO:0000318"/>
    <property type="project" value="GO_Central"/>
</dbReference>
<dbReference type="GO" id="GO:0002098">
    <property type="term" value="P:tRNA wobble uridine modification"/>
    <property type="evidence" value="ECO:0000250"/>
    <property type="project" value="UniProtKB"/>
</dbReference>
<dbReference type="CDD" id="cd01713">
    <property type="entry name" value="CTU1-like"/>
    <property type="match status" value="1"/>
</dbReference>
<dbReference type="FunFam" id="3.40.50.620:FF:000054">
    <property type="entry name" value="Cytoplasmic tRNA 2-thiolation protein 1"/>
    <property type="match status" value="1"/>
</dbReference>
<dbReference type="Gene3D" id="3.40.50.620">
    <property type="entry name" value="HUPs"/>
    <property type="match status" value="1"/>
</dbReference>
<dbReference type="HAMAP" id="MF_03053">
    <property type="entry name" value="CTU1"/>
    <property type="match status" value="1"/>
</dbReference>
<dbReference type="InterPro" id="IPR056369">
    <property type="entry name" value="CTU1-like_ATP-bd"/>
</dbReference>
<dbReference type="InterPro" id="IPR032442">
    <property type="entry name" value="CTU1_C"/>
</dbReference>
<dbReference type="InterPro" id="IPR000541">
    <property type="entry name" value="Ncs6/Tuc1/Ctu1"/>
</dbReference>
<dbReference type="InterPro" id="IPR014729">
    <property type="entry name" value="Rossmann-like_a/b/a_fold"/>
</dbReference>
<dbReference type="InterPro" id="IPR011063">
    <property type="entry name" value="TilS/TtcA_N"/>
</dbReference>
<dbReference type="InterPro" id="IPR035107">
    <property type="entry name" value="tRNA_thiolation_TtcA_Ctu1"/>
</dbReference>
<dbReference type="InterPro" id="IPR020554">
    <property type="entry name" value="UPF0021_CS"/>
</dbReference>
<dbReference type="NCBIfam" id="TIGR00269">
    <property type="entry name" value="TIGR00269 family protein"/>
    <property type="match status" value="1"/>
</dbReference>
<dbReference type="PANTHER" id="PTHR11807">
    <property type="entry name" value="ATPASES OF THE PP SUPERFAMILY-RELATED"/>
    <property type="match status" value="1"/>
</dbReference>
<dbReference type="PANTHER" id="PTHR11807:SF12">
    <property type="entry name" value="CYTOPLASMIC TRNA 2-THIOLATION PROTEIN 1"/>
    <property type="match status" value="1"/>
</dbReference>
<dbReference type="Pfam" id="PF01171">
    <property type="entry name" value="ATP_bind_3"/>
    <property type="match status" value="1"/>
</dbReference>
<dbReference type="Pfam" id="PF16503">
    <property type="entry name" value="zn-ribbon_14"/>
    <property type="match status" value="1"/>
</dbReference>
<dbReference type="PIRSF" id="PIRSF004976">
    <property type="entry name" value="ATPase_YdaO"/>
    <property type="match status" value="1"/>
</dbReference>
<dbReference type="SUPFAM" id="SSF52402">
    <property type="entry name" value="Adenine nucleotide alpha hydrolases-like"/>
    <property type="match status" value="1"/>
</dbReference>
<dbReference type="PROSITE" id="PS01263">
    <property type="entry name" value="UPF0021"/>
    <property type="match status" value="1"/>
</dbReference>
<feature type="chain" id="PRO_0000282394" description="Cytoplasmic tRNA 2-thiolation protein 1">
    <location>
        <begin position="1"/>
        <end position="341"/>
    </location>
</feature>
<gene>
    <name type="primary">ctu1</name>
    <name type="synonym">atpbd3</name>
    <name type="synonym">ncs6</name>
</gene>
<reference key="1">
    <citation type="submission" date="2006-09" db="EMBL/GenBank/DDBJ databases">
        <authorList>
            <consortium name="NIH - Xenopus Gene Collection (XGC) project"/>
        </authorList>
    </citation>
    <scope>NUCLEOTIDE SEQUENCE [LARGE SCALE MRNA]</scope>
    <source>
        <tissue>Embryo</tissue>
    </source>
</reference>
<protein>
    <recommendedName>
        <fullName evidence="1">Cytoplasmic tRNA 2-thiolation protein 1</fullName>
        <ecNumber evidence="1">2.7.7.-</ecNumber>
    </recommendedName>
    <alternativeName>
        <fullName evidence="1">ATP-binding domain-containing protein 3</fullName>
    </alternativeName>
    <alternativeName>
        <fullName evidence="1">Cytoplasmic tRNA adenylyltransferase 1</fullName>
    </alternativeName>
</protein>
<organism>
    <name type="scientific">Xenopus laevis</name>
    <name type="common">African clawed frog</name>
    <dbReference type="NCBI Taxonomy" id="8355"/>
    <lineage>
        <taxon>Eukaryota</taxon>
        <taxon>Metazoa</taxon>
        <taxon>Chordata</taxon>
        <taxon>Craniata</taxon>
        <taxon>Vertebrata</taxon>
        <taxon>Euteleostomi</taxon>
        <taxon>Amphibia</taxon>
        <taxon>Batrachia</taxon>
        <taxon>Anura</taxon>
        <taxon>Pipoidea</taxon>
        <taxon>Pipidae</taxon>
        <taxon>Xenopodinae</taxon>
        <taxon>Xenopus</taxon>
        <taxon>Xenopus</taxon>
    </lineage>
</organism>
<proteinExistence type="evidence at transcript level"/>
<accession>Q05AW7</accession>